<comment type="catalytic activity">
    <reaction>
        <text>L-seryl-[protein] + ATP = O-phospho-L-seryl-[protein] + ADP + H(+)</text>
        <dbReference type="Rhea" id="RHEA:17989"/>
        <dbReference type="Rhea" id="RHEA-COMP:9863"/>
        <dbReference type="Rhea" id="RHEA-COMP:11604"/>
        <dbReference type="ChEBI" id="CHEBI:15378"/>
        <dbReference type="ChEBI" id="CHEBI:29999"/>
        <dbReference type="ChEBI" id="CHEBI:30616"/>
        <dbReference type="ChEBI" id="CHEBI:83421"/>
        <dbReference type="ChEBI" id="CHEBI:456216"/>
        <dbReference type="EC" id="2.7.11.1"/>
    </reaction>
</comment>
<comment type="catalytic activity">
    <reaction>
        <text>L-threonyl-[protein] + ATP = O-phospho-L-threonyl-[protein] + ADP + H(+)</text>
        <dbReference type="Rhea" id="RHEA:46608"/>
        <dbReference type="Rhea" id="RHEA-COMP:11060"/>
        <dbReference type="Rhea" id="RHEA-COMP:11605"/>
        <dbReference type="ChEBI" id="CHEBI:15378"/>
        <dbReference type="ChEBI" id="CHEBI:30013"/>
        <dbReference type="ChEBI" id="CHEBI:30616"/>
        <dbReference type="ChEBI" id="CHEBI:61977"/>
        <dbReference type="ChEBI" id="CHEBI:456216"/>
        <dbReference type="EC" id="2.7.11.1"/>
    </reaction>
</comment>
<comment type="similarity">
    <text evidence="1">Belongs to the protein kinase superfamily. Ser/Thr protein kinase family.</text>
</comment>
<organism>
    <name type="scientific">Dictyostelium discoideum</name>
    <name type="common">Social amoeba</name>
    <dbReference type="NCBI Taxonomy" id="44689"/>
    <lineage>
        <taxon>Eukaryota</taxon>
        <taxon>Amoebozoa</taxon>
        <taxon>Evosea</taxon>
        <taxon>Eumycetozoa</taxon>
        <taxon>Dictyostelia</taxon>
        <taxon>Dictyosteliales</taxon>
        <taxon>Dictyosteliaceae</taxon>
        <taxon>Dictyostelium</taxon>
    </lineage>
</organism>
<feature type="chain" id="PRO_0000362035" description="Probable serine/threonine-protein kinase vps15">
    <location>
        <begin position="1"/>
        <end position="1966"/>
    </location>
</feature>
<feature type="domain" description="Protein kinase" evidence="1">
    <location>
        <begin position="21"/>
        <end position="303"/>
    </location>
</feature>
<feature type="repeat" description="HEAT 1">
    <location>
        <begin position="558"/>
        <end position="596"/>
    </location>
</feature>
<feature type="repeat" description="HEAT 2">
    <location>
        <begin position="604"/>
        <end position="642"/>
    </location>
</feature>
<feature type="repeat" description="HEAT 3">
    <location>
        <begin position="717"/>
        <end position="754"/>
    </location>
</feature>
<feature type="repeat" description="HEAT 4">
    <location>
        <begin position="756"/>
        <end position="793"/>
    </location>
</feature>
<feature type="repeat" description="WD 1">
    <location>
        <begin position="1460"/>
        <end position="1499"/>
    </location>
</feature>
<feature type="repeat" description="WD 2">
    <location>
        <begin position="1508"/>
        <end position="1547"/>
    </location>
</feature>
<feature type="repeat" description="WD 3">
    <location>
        <begin position="1564"/>
        <end position="1605"/>
    </location>
</feature>
<feature type="repeat" description="WD 4">
    <location>
        <begin position="1610"/>
        <end position="1649"/>
    </location>
</feature>
<feature type="repeat" description="WD 5">
    <location>
        <begin position="1790"/>
        <end position="1829"/>
    </location>
</feature>
<feature type="repeat" description="WD 6">
    <location>
        <begin position="1935"/>
        <end position="1966"/>
    </location>
</feature>
<feature type="region of interest" description="Disordered" evidence="3">
    <location>
        <begin position="362"/>
        <end position="407"/>
    </location>
</feature>
<feature type="region of interest" description="Disordered" evidence="3">
    <location>
        <begin position="916"/>
        <end position="937"/>
    </location>
</feature>
<feature type="region of interest" description="Disordered" evidence="3">
    <location>
        <begin position="1036"/>
        <end position="1062"/>
    </location>
</feature>
<feature type="region of interest" description="Disordered" evidence="3">
    <location>
        <begin position="1106"/>
        <end position="1130"/>
    </location>
</feature>
<feature type="region of interest" description="Disordered" evidence="3">
    <location>
        <begin position="1190"/>
        <end position="1263"/>
    </location>
</feature>
<feature type="region of interest" description="Disordered" evidence="3">
    <location>
        <begin position="1699"/>
        <end position="1743"/>
    </location>
</feature>
<feature type="compositionally biased region" description="Low complexity" evidence="3">
    <location>
        <begin position="367"/>
        <end position="407"/>
    </location>
</feature>
<feature type="compositionally biased region" description="Low complexity" evidence="3">
    <location>
        <begin position="1106"/>
        <end position="1119"/>
    </location>
</feature>
<feature type="compositionally biased region" description="Low complexity" evidence="3">
    <location>
        <begin position="1192"/>
        <end position="1263"/>
    </location>
</feature>
<feature type="compositionally biased region" description="Low complexity" evidence="3">
    <location>
        <begin position="1703"/>
        <end position="1722"/>
    </location>
</feature>
<feature type="compositionally biased region" description="Low complexity" evidence="3">
    <location>
        <begin position="1732"/>
        <end position="1742"/>
    </location>
</feature>
<feature type="active site" description="Proton acceptor" evidence="1 2">
    <location>
        <position position="144"/>
    </location>
</feature>
<feature type="binding site" evidence="1">
    <location>
        <begin position="27"/>
        <end position="35"/>
    </location>
    <ligand>
        <name>ATP</name>
        <dbReference type="ChEBI" id="CHEBI:30616"/>
    </ligand>
</feature>
<feature type="binding site" evidence="1">
    <location>
        <position position="49"/>
    </location>
    <ligand>
        <name>ATP</name>
        <dbReference type="ChEBI" id="CHEBI:30616"/>
    </ligand>
</feature>
<reference key="1">
    <citation type="journal article" date="2005" name="Nature">
        <title>The genome of the social amoeba Dictyostelium discoideum.</title>
        <authorList>
            <person name="Eichinger L."/>
            <person name="Pachebat J.A."/>
            <person name="Gloeckner G."/>
            <person name="Rajandream M.A."/>
            <person name="Sucgang R."/>
            <person name="Berriman M."/>
            <person name="Song J."/>
            <person name="Olsen R."/>
            <person name="Szafranski K."/>
            <person name="Xu Q."/>
            <person name="Tunggal B."/>
            <person name="Kummerfeld S."/>
            <person name="Madera M."/>
            <person name="Konfortov B.A."/>
            <person name="Rivero F."/>
            <person name="Bankier A.T."/>
            <person name="Lehmann R."/>
            <person name="Hamlin N."/>
            <person name="Davies R."/>
            <person name="Gaudet P."/>
            <person name="Fey P."/>
            <person name="Pilcher K."/>
            <person name="Chen G."/>
            <person name="Saunders D."/>
            <person name="Sodergren E.J."/>
            <person name="Davis P."/>
            <person name="Kerhornou A."/>
            <person name="Nie X."/>
            <person name="Hall N."/>
            <person name="Anjard C."/>
            <person name="Hemphill L."/>
            <person name="Bason N."/>
            <person name="Farbrother P."/>
            <person name="Desany B."/>
            <person name="Just E."/>
            <person name="Morio T."/>
            <person name="Rost R."/>
            <person name="Churcher C.M."/>
            <person name="Cooper J."/>
            <person name="Haydock S."/>
            <person name="van Driessche N."/>
            <person name="Cronin A."/>
            <person name="Goodhead I."/>
            <person name="Muzny D.M."/>
            <person name="Mourier T."/>
            <person name="Pain A."/>
            <person name="Lu M."/>
            <person name="Harper D."/>
            <person name="Lindsay R."/>
            <person name="Hauser H."/>
            <person name="James K.D."/>
            <person name="Quiles M."/>
            <person name="Madan Babu M."/>
            <person name="Saito T."/>
            <person name="Buchrieser C."/>
            <person name="Wardroper A."/>
            <person name="Felder M."/>
            <person name="Thangavelu M."/>
            <person name="Johnson D."/>
            <person name="Knights A."/>
            <person name="Loulseged H."/>
            <person name="Mungall K.L."/>
            <person name="Oliver K."/>
            <person name="Price C."/>
            <person name="Quail M.A."/>
            <person name="Urushihara H."/>
            <person name="Hernandez J."/>
            <person name="Rabbinowitsch E."/>
            <person name="Steffen D."/>
            <person name="Sanders M."/>
            <person name="Ma J."/>
            <person name="Kohara Y."/>
            <person name="Sharp S."/>
            <person name="Simmonds M.N."/>
            <person name="Spiegler S."/>
            <person name="Tivey A."/>
            <person name="Sugano S."/>
            <person name="White B."/>
            <person name="Walker D."/>
            <person name="Woodward J.R."/>
            <person name="Winckler T."/>
            <person name="Tanaka Y."/>
            <person name="Shaulsky G."/>
            <person name="Schleicher M."/>
            <person name="Weinstock G.M."/>
            <person name="Rosenthal A."/>
            <person name="Cox E.C."/>
            <person name="Chisholm R.L."/>
            <person name="Gibbs R.A."/>
            <person name="Loomis W.F."/>
            <person name="Platzer M."/>
            <person name="Kay R.R."/>
            <person name="Williams J.G."/>
            <person name="Dear P.H."/>
            <person name="Noegel A.A."/>
            <person name="Barrell B.G."/>
            <person name="Kuspa A."/>
        </authorList>
    </citation>
    <scope>NUCLEOTIDE SEQUENCE [LARGE SCALE GENOMIC DNA]</scope>
    <source>
        <strain>AX4</strain>
    </source>
</reference>
<proteinExistence type="inferred from homology"/>
<accession>Q54S77</accession>
<name>VPS15_DICDI</name>
<gene>
    <name type="primary">vps15</name>
    <name type="synonym">pik3r4</name>
    <name type="ORF">DDB_G0282627</name>
</gene>
<protein>
    <recommendedName>
        <fullName>Probable serine/threonine-protein kinase vps15</fullName>
        <ecNumber>2.7.11.1</ecNumber>
    </recommendedName>
    <alternativeName>
        <fullName>Phosphoinositide 3-kinase regulatory subunit 4</fullName>
    </alternativeName>
    <alternativeName>
        <fullName>Vacuolar protein sorting protein 15</fullName>
    </alternativeName>
</protein>
<keyword id="KW-0067">ATP-binding</keyword>
<keyword id="KW-0418">Kinase</keyword>
<keyword id="KW-0547">Nucleotide-binding</keyword>
<keyword id="KW-1185">Reference proteome</keyword>
<keyword id="KW-0677">Repeat</keyword>
<keyword id="KW-0723">Serine/threonine-protein kinase</keyword>
<keyword id="KW-0808">Transferase</keyword>
<keyword id="KW-0853">WD repeat</keyword>
<dbReference type="EC" id="2.7.11.1"/>
<dbReference type="EMBL" id="AAFI02000047">
    <property type="protein sequence ID" value="EAL66173.1"/>
    <property type="molecule type" value="Genomic_DNA"/>
</dbReference>
<dbReference type="RefSeq" id="XP_640162.1">
    <property type="nucleotide sequence ID" value="XM_635070.1"/>
</dbReference>
<dbReference type="SMR" id="Q54S77"/>
<dbReference type="FunCoup" id="Q54S77">
    <property type="interactions" value="515"/>
</dbReference>
<dbReference type="STRING" id="44689.Q54S77"/>
<dbReference type="GlyGen" id="Q54S77">
    <property type="glycosylation" value="1 site"/>
</dbReference>
<dbReference type="PaxDb" id="44689-DDB0216334"/>
<dbReference type="EnsemblProtists" id="EAL66173">
    <property type="protein sequence ID" value="EAL66173"/>
    <property type="gene ID" value="DDB_G0282627"/>
</dbReference>
<dbReference type="GeneID" id="8623700"/>
<dbReference type="KEGG" id="ddi:DDB_G0282627"/>
<dbReference type="dictyBase" id="DDB_G0282627">
    <property type="gene designation" value="vps15"/>
</dbReference>
<dbReference type="VEuPathDB" id="AmoebaDB:DDB_G0282627"/>
<dbReference type="eggNOG" id="KOG1240">
    <property type="taxonomic scope" value="Eukaryota"/>
</dbReference>
<dbReference type="HOGENOM" id="CLU_001696_0_1_1"/>
<dbReference type="InParanoid" id="Q54S77"/>
<dbReference type="OMA" id="ANEMSIW"/>
<dbReference type="Reactome" id="R-DDI-1632852">
    <property type="pathway name" value="Macroautophagy"/>
</dbReference>
<dbReference type="Reactome" id="R-DDI-1660514">
    <property type="pathway name" value="Synthesis of PIPs at the Golgi membrane"/>
</dbReference>
<dbReference type="Reactome" id="R-DDI-1660516">
    <property type="pathway name" value="Synthesis of PIPs at the early endosome membrane"/>
</dbReference>
<dbReference type="Reactome" id="R-DDI-1660517">
    <property type="pathway name" value="Synthesis of PIPs at the late endosome membrane"/>
</dbReference>
<dbReference type="Reactome" id="R-DDI-5668599">
    <property type="pathway name" value="RHO GTPases Activate NADPH Oxidases"/>
</dbReference>
<dbReference type="PRO" id="PR:Q54S77"/>
<dbReference type="Proteomes" id="UP000002195">
    <property type="component" value="Chromosome 3"/>
</dbReference>
<dbReference type="GO" id="GO:0005770">
    <property type="term" value="C:late endosome"/>
    <property type="evidence" value="ECO:0000318"/>
    <property type="project" value="GO_Central"/>
</dbReference>
<dbReference type="GO" id="GO:0071561">
    <property type="term" value="C:nucleus-vacuole junction"/>
    <property type="evidence" value="ECO:0000318"/>
    <property type="project" value="GO_Central"/>
</dbReference>
<dbReference type="GO" id="GO:0034271">
    <property type="term" value="C:phosphatidylinositol 3-kinase complex, class III, type I"/>
    <property type="evidence" value="ECO:0000318"/>
    <property type="project" value="GO_Central"/>
</dbReference>
<dbReference type="GO" id="GO:0034272">
    <property type="term" value="C:phosphatidylinositol 3-kinase complex, class III, type II"/>
    <property type="evidence" value="ECO:0000318"/>
    <property type="project" value="GO_Central"/>
</dbReference>
<dbReference type="GO" id="GO:0005524">
    <property type="term" value="F:ATP binding"/>
    <property type="evidence" value="ECO:0007669"/>
    <property type="project" value="UniProtKB-KW"/>
</dbReference>
<dbReference type="GO" id="GO:0106310">
    <property type="term" value="F:protein serine kinase activity"/>
    <property type="evidence" value="ECO:0007669"/>
    <property type="project" value="RHEA"/>
</dbReference>
<dbReference type="GO" id="GO:0004674">
    <property type="term" value="F:protein serine/threonine kinase activity"/>
    <property type="evidence" value="ECO:0000250"/>
    <property type="project" value="dictyBase"/>
</dbReference>
<dbReference type="GO" id="GO:0045324">
    <property type="term" value="P:late endosome to vacuole transport"/>
    <property type="evidence" value="ECO:0000318"/>
    <property type="project" value="GO_Central"/>
</dbReference>
<dbReference type="GO" id="GO:0000425">
    <property type="term" value="P:pexophagy"/>
    <property type="evidence" value="ECO:0000318"/>
    <property type="project" value="GO_Central"/>
</dbReference>
<dbReference type="GO" id="GO:0006468">
    <property type="term" value="P:protein phosphorylation"/>
    <property type="evidence" value="ECO:0000250"/>
    <property type="project" value="dictyBase"/>
</dbReference>
<dbReference type="GO" id="GO:0045053">
    <property type="term" value="P:protein retention in Golgi apparatus"/>
    <property type="evidence" value="ECO:0000250"/>
    <property type="project" value="dictyBase"/>
</dbReference>
<dbReference type="GO" id="GO:0006623">
    <property type="term" value="P:protein targeting to vacuole"/>
    <property type="evidence" value="ECO:0000250"/>
    <property type="project" value="dictyBase"/>
</dbReference>
<dbReference type="GO" id="GO:0007034">
    <property type="term" value="P:vacuolar transport"/>
    <property type="evidence" value="ECO:0000250"/>
    <property type="project" value="dictyBase"/>
</dbReference>
<dbReference type="CDD" id="cd13980">
    <property type="entry name" value="STKc_Vps15"/>
    <property type="match status" value="1"/>
</dbReference>
<dbReference type="FunFam" id="1.10.510.10:FF:000497">
    <property type="entry name" value="Phosphoinositide 3-kinase regulatory subunit"/>
    <property type="match status" value="1"/>
</dbReference>
<dbReference type="FunFam" id="1.25.10.10:FF:001910">
    <property type="entry name" value="Probable serine/threonine-protein kinase vps15"/>
    <property type="match status" value="1"/>
</dbReference>
<dbReference type="FunFam" id="1.25.10.10:FF:001915">
    <property type="entry name" value="Probable serine/threonine-protein kinase vps15"/>
    <property type="match status" value="1"/>
</dbReference>
<dbReference type="FunFam" id="2.130.10.10:FF:003367">
    <property type="entry name" value="Probable serine/threonine-protein kinase vps15"/>
    <property type="match status" value="1"/>
</dbReference>
<dbReference type="FunFam" id="2.130.10.10:FF:003379">
    <property type="entry name" value="Probable serine/threonine-protein kinase vps15"/>
    <property type="match status" value="1"/>
</dbReference>
<dbReference type="Gene3D" id="1.25.10.10">
    <property type="entry name" value="Leucine-rich Repeat Variant"/>
    <property type="match status" value="2"/>
</dbReference>
<dbReference type="Gene3D" id="1.10.510.10">
    <property type="entry name" value="Transferase(Phosphotransferase) domain 1"/>
    <property type="match status" value="1"/>
</dbReference>
<dbReference type="Gene3D" id="2.130.10.10">
    <property type="entry name" value="YVTN repeat-like/Quinoprotein amine dehydrogenase"/>
    <property type="match status" value="2"/>
</dbReference>
<dbReference type="InterPro" id="IPR011989">
    <property type="entry name" value="ARM-like"/>
</dbReference>
<dbReference type="InterPro" id="IPR016024">
    <property type="entry name" value="ARM-type_fold"/>
</dbReference>
<dbReference type="InterPro" id="IPR021133">
    <property type="entry name" value="HEAT_type_2"/>
</dbReference>
<dbReference type="InterPro" id="IPR011009">
    <property type="entry name" value="Kinase-like_dom_sf"/>
</dbReference>
<dbReference type="InterPro" id="IPR000719">
    <property type="entry name" value="Prot_kinase_dom"/>
</dbReference>
<dbReference type="InterPro" id="IPR008271">
    <property type="entry name" value="Ser/Thr_kinase_AS"/>
</dbReference>
<dbReference type="InterPro" id="IPR045162">
    <property type="entry name" value="Vps15-like"/>
</dbReference>
<dbReference type="InterPro" id="IPR055231">
    <property type="entry name" value="VPS15-like_hel"/>
</dbReference>
<dbReference type="InterPro" id="IPR015943">
    <property type="entry name" value="WD40/YVTN_repeat-like_dom_sf"/>
</dbReference>
<dbReference type="InterPro" id="IPR036322">
    <property type="entry name" value="WD40_repeat_dom_sf"/>
</dbReference>
<dbReference type="InterPro" id="IPR001680">
    <property type="entry name" value="WD40_rpt"/>
</dbReference>
<dbReference type="PANTHER" id="PTHR17583">
    <property type="entry name" value="PHOSPHOINOSITIDE 3-KINASE REGULATORY SUBUNIT 4"/>
    <property type="match status" value="1"/>
</dbReference>
<dbReference type="PANTHER" id="PTHR17583:SF0">
    <property type="entry name" value="PHOSPHOINOSITIDE 3-KINASE REGULATORY SUBUNIT 4"/>
    <property type="match status" value="1"/>
</dbReference>
<dbReference type="Pfam" id="PF00069">
    <property type="entry name" value="Pkinase"/>
    <property type="match status" value="1"/>
</dbReference>
<dbReference type="Pfam" id="PF22956">
    <property type="entry name" value="VPS15-like_hel"/>
    <property type="match status" value="1"/>
</dbReference>
<dbReference type="Pfam" id="PF00400">
    <property type="entry name" value="WD40"/>
    <property type="match status" value="2"/>
</dbReference>
<dbReference type="SMART" id="SM00220">
    <property type="entry name" value="S_TKc"/>
    <property type="match status" value="1"/>
</dbReference>
<dbReference type="SMART" id="SM00320">
    <property type="entry name" value="WD40"/>
    <property type="match status" value="5"/>
</dbReference>
<dbReference type="SUPFAM" id="SSF48371">
    <property type="entry name" value="ARM repeat"/>
    <property type="match status" value="1"/>
</dbReference>
<dbReference type="SUPFAM" id="SSF56112">
    <property type="entry name" value="Protein kinase-like (PK-like)"/>
    <property type="match status" value="1"/>
</dbReference>
<dbReference type="SUPFAM" id="SSF50978">
    <property type="entry name" value="WD40 repeat-like"/>
    <property type="match status" value="1"/>
</dbReference>
<dbReference type="PROSITE" id="PS50077">
    <property type="entry name" value="HEAT_REPEAT"/>
    <property type="match status" value="1"/>
</dbReference>
<dbReference type="PROSITE" id="PS50011">
    <property type="entry name" value="PROTEIN_KINASE_DOM"/>
    <property type="match status" value="1"/>
</dbReference>
<dbReference type="PROSITE" id="PS00108">
    <property type="entry name" value="PROTEIN_KINASE_ST"/>
    <property type="match status" value="1"/>
</dbReference>
<dbReference type="PROSITE" id="PS50082">
    <property type="entry name" value="WD_REPEATS_2"/>
    <property type="match status" value="3"/>
</dbReference>
<dbReference type="PROSITE" id="PS50294">
    <property type="entry name" value="WD_REPEATS_REGION"/>
    <property type="match status" value="2"/>
</dbReference>
<evidence type="ECO:0000255" key="1">
    <source>
        <dbReference type="PROSITE-ProRule" id="PRU00159"/>
    </source>
</evidence>
<evidence type="ECO:0000255" key="2">
    <source>
        <dbReference type="PROSITE-ProRule" id="PRU10027"/>
    </source>
</evidence>
<evidence type="ECO:0000256" key="3">
    <source>
        <dbReference type="SAM" id="MobiDB-lite"/>
    </source>
</evidence>
<sequence>MGNTVGAPIVSEYLEDEIGPIVFKKSLGNARFLKTVKAYHSEEGYVVVKIYKKRNTKESLEKYKIMLKEIKDNFNITPSFNIMPYQHFIETDRSGYLIRQYFHNNLYDRLSTRPFLSMIEKKFIAFQLLKALEQSSFKGVFHGDIKSENVLVTTSNWVYLSDFACYKPTFIPEDNPADFSFYFDTSGRRTCYIAPERFYETNRGAPSNNELTPKMDIFSLGCVIAELFLDGFPIFDFSQLLSYRKGEYSPEPIIRQRIQDPNIQTLILHMIQKDPDQRYTPEKYISKWNTVFPQYFSFAHQFIPELMRLENDDRVMCISDKFDEIVDIFKNNSITNLFKSNLNQSTNSNTIGSFRVSTPSSPILISNNNNNNNNNNNNNNNNNNNNNNNNNNNNNNNNNQTTTTTTNTNINTTQQQQQQQQQQQQQLQRPLSKLDDIGKNIANIIYKTEQFVKESDEFDKTDITNIKELNIQTTPTINTSTINRVIQTSKTNTNLDTINENSNNNIGVNRKKVTVVEGLDLFLSVIYTAVKHCQFPSTKVKCVGSLLVRLAEMLDDECRLQKIVPYIMSMISPEQPTLVRVEALRSLAKVLEMVQTFPPSESSIFGQYILPSLSQLSHESTDEIIRIAFAEILPQLATTAKRFLEIAQHYRDPDSEGIMESRKDRAKFRVYDSDLQEVQDQFFNKVSDLLTKDSCNTLKKIILSDIYRLCVFFGRQKTNESVLPLIITFLNDRDWQLRCAFFENIVAVCTVVGAGSLESFIYPCILLALTDEEEFVTEKALSSLSELCSLGLLRKPILLELLVKTSPMLLHPNNWIRYGVVSLIVKICQSLSKADVYCYVKPKLSPFLVNLNGNGNGNAEISDTITESNLIQLLDSPISRESFNKIVKFIARNRINLSSSINSILANDNDNFNGESFNSNGSGGGGNPNLVSSTGGSNRRLRALSNKFFVPNILSASNSSINSTSGDIGSLLSQSTEESLAFLRQMTSIGISDSDQNKIIKCFDYLQSKKCKDLESANNSEGNVIVIRTNGTTIISSSNNSNNNTLSSSTTSSNSTTPTNSTVNLHSVLNNTTIIQQQQQQLQQTITQQSITQQQQQQQQQQQVSGGITTGGTTTTTLGRSSSPQLTGLNPSILSNSNNIQLSSSVVDVTKLPNSIPIRMVKIRGGDQSLNNSTVSLGSVAGGNIITPSTSLSNSNTMVGNNNNNSYNTSTSSSPLSSSVLNSSVGMNNLTNSNANSINNSSGINNNNSNNNSVNSNNYNNMNNNTMNNSVNLMNSNQIGQQQQQNPNTVKIDLVSPSDLNVVSKKYYIRDPKMGLSTILKVETNVECSIKVPLPLPDLGSTDSVLGGGLLSSGGVGGGVGGTGGGNINGVSGINGNVGGGGGGVGVGTVGSGGNGSIGGGNSGINNGSGGGGVNSGGNSGINSGSTNSSGSLYGNGNGLDNLPNSTWRPMGILVSHFFEHKAAVNEIQVSSDNLFFATASNDGTVKIWDCQRMEKSVTNRARQTYAQQEGRITSISICEKTHSIASASDKGSIHVFRVGISGKQKNGNIKYTNLSTVKNITETTRGNIVSVSHYSTNSSSVVTYATTKGGIHGWDLRSQQDAFNLVNDASLGLIQAFLIDPNRNWLVTGTSRGFLTCWDLRFGIPLYSVRVSNGRILKFAPYMLAKSASESWVYISTEQDNVIVFDLSNKKTTRVFKRSYEQPPQQQPQQPQPPQQQQQQQSQMNRSINMTSSTTTTTTSSYDFGTENLKTSSYSQLPSNPLVNSIVNNSNINNNNNNNDNSNNVTIFKPTPLVRALLNPPNCPFLITAGDDKRIKLWDWNNLPQSYYVSIGKEPPPFYTHKFSNDTSNAYEIHEEVWHDTSSSSFYSNSAMFGGGGGGQPMSTSLSSSSLSQQQHQAQLQLQYQLQQQQQQQQYINHLQQQKSKTSISMPTVHHQEPILDIKMMEVPNPMLISASTDGVVKVWK</sequence>